<protein>
    <recommendedName>
        <fullName evidence="1">Proline--tRNA ligase</fullName>
        <ecNumber evidence="1">6.1.1.15</ecNumber>
    </recommendedName>
    <alternativeName>
        <fullName evidence="1">Prolyl-tRNA synthetase</fullName>
        <shortName evidence="1">ProRS</shortName>
    </alternativeName>
</protein>
<reference key="1">
    <citation type="journal article" date="2006" name="Proc. Natl. Acad. Sci. U.S.A.">
        <title>Comparative genomics of the lactic acid bacteria.</title>
        <authorList>
            <person name="Makarova K.S."/>
            <person name="Slesarev A."/>
            <person name="Wolf Y.I."/>
            <person name="Sorokin A."/>
            <person name="Mirkin B."/>
            <person name="Koonin E.V."/>
            <person name="Pavlov A."/>
            <person name="Pavlova N."/>
            <person name="Karamychev V."/>
            <person name="Polouchine N."/>
            <person name="Shakhova V."/>
            <person name="Grigoriev I."/>
            <person name="Lou Y."/>
            <person name="Rohksar D."/>
            <person name="Lucas S."/>
            <person name="Huang K."/>
            <person name="Goodstein D.M."/>
            <person name="Hawkins T."/>
            <person name="Plengvidhya V."/>
            <person name="Welker D."/>
            <person name="Hughes J."/>
            <person name="Goh Y."/>
            <person name="Benson A."/>
            <person name="Baldwin K."/>
            <person name="Lee J.-H."/>
            <person name="Diaz-Muniz I."/>
            <person name="Dosti B."/>
            <person name="Smeianov V."/>
            <person name="Wechter W."/>
            <person name="Barabote R."/>
            <person name="Lorca G."/>
            <person name="Altermann E."/>
            <person name="Barrangou R."/>
            <person name="Ganesan B."/>
            <person name="Xie Y."/>
            <person name="Rawsthorne H."/>
            <person name="Tamir D."/>
            <person name="Parker C."/>
            <person name="Breidt F."/>
            <person name="Broadbent J.R."/>
            <person name="Hutkins R."/>
            <person name="O'Sullivan D."/>
            <person name="Steele J."/>
            <person name="Unlu G."/>
            <person name="Saier M.H. Jr."/>
            <person name="Klaenhammer T."/>
            <person name="Richardson P."/>
            <person name="Kozyavkin S."/>
            <person name="Weimer B.C."/>
            <person name="Mills D.A."/>
        </authorList>
    </citation>
    <scope>NUCLEOTIDE SEQUENCE [LARGE SCALE GENOMIC DNA]</scope>
    <source>
        <strain>SK11</strain>
    </source>
</reference>
<organism>
    <name type="scientific">Lactococcus lactis subsp. cremoris (strain SK11)</name>
    <dbReference type="NCBI Taxonomy" id="272622"/>
    <lineage>
        <taxon>Bacteria</taxon>
        <taxon>Bacillati</taxon>
        <taxon>Bacillota</taxon>
        <taxon>Bacilli</taxon>
        <taxon>Lactobacillales</taxon>
        <taxon>Streptococcaceae</taxon>
        <taxon>Lactococcus</taxon>
        <taxon>Lactococcus cremoris subsp. cremoris</taxon>
    </lineage>
</organism>
<sequence length="616" mass="69278">MKQSKMLIPTLREMPSDAQVISHALLMRAGYVRQVSAGIYAYLPLANRVLEKLKNIMREEFDEIGAVELLAPSLLTADLWRESGRYETYGEDLYKLKNRDSSDFILGPTHEETMTSLVRDEITSYKKLPLNVYQIATKFRDEKRPRYGLLRGREFLMKDGYSYHADQDSLDETYLDYKKSYEKIFERAGLNFKPIIADAGAMGGKDSQEFIAITDDRINLEKWLVLSKNITSIDEIPESVLSEIQEELGKWLVAGEDTIVYAEGGDYAANIEMATSQFEPNVAYTEELELEKVATPGAKTIDEVSDFLEIDEEQTVKTLVYHADDELIVILLNGNDQLNEVKLTNRLGASFIEAASEAEVEEKFGAHFGSLGPIGLENVRIIADRKVELIKNAVVGANVDGYHYKNANFGRDFEVEEFVDLRTVNEGEISPDGRGTLKFARGIEIGHIFKLGTRYTEAMNANILDANGRSIPMLMGCYGIGVSRLLSAILEQFARIYVEKTPREEFKFSWSINFPKELAPFDIHLVPVNVKDEAAMELTSELEEKLRGKGYQVLVDDRNERAGVKFADSDLIGLPVRVTIGKKAAEGIVEVKIRATGEVVEINKDELVNTIEILSK</sequence>
<keyword id="KW-0030">Aminoacyl-tRNA synthetase</keyword>
<keyword id="KW-0067">ATP-binding</keyword>
<keyword id="KW-0963">Cytoplasm</keyword>
<keyword id="KW-0436">Ligase</keyword>
<keyword id="KW-0547">Nucleotide-binding</keyword>
<keyword id="KW-0648">Protein biosynthesis</keyword>
<comment type="function">
    <text evidence="1">Catalyzes the attachment of proline to tRNA(Pro) in a two-step reaction: proline is first activated by ATP to form Pro-AMP and then transferred to the acceptor end of tRNA(Pro). As ProRS can inadvertently accommodate and process non-cognate amino acids such as alanine and cysteine, to avoid such errors it has two additional distinct editing activities against alanine. One activity is designated as 'pretransfer' editing and involves the tRNA(Pro)-independent hydrolysis of activated Ala-AMP. The other activity is designated 'posttransfer' editing and involves deacylation of mischarged Ala-tRNA(Pro). The misacylated Cys-tRNA(Pro) is not edited by ProRS.</text>
</comment>
<comment type="catalytic activity">
    <reaction evidence="1">
        <text>tRNA(Pro) + L-proline + ATP = L-prolyl-tRNA(Pro) + AMP + diphosphate</text>
        <dbReference type="Rhea" id="RHEA:14305"/>
        <dbReference type="Rhea" id="RHEA-COMP:9700"/>
        <dbReference type="Rhea" id="RHEA-COMP:9702"/>
        <dbReference type="ChEBI" id="CHEBI:30616"/>
        <dbReference type="ChEBI" id="CHEBI:33019"/>
        <dbReference type="ChEBI" id="CHEBI:60039"/>
        <dbReference type="ChEBI" id="CHEBI:78442"/>
        <dbReference type="ChEBI" id="CHEBI:78532"/>
        <dbReference type="ChEBI" id="CHEBI:456215"/>
        <dbReference type="EC" id="6.1.1.15"/>
    </reaction>
</comment>
<comment type="subunit">
    <text evidence="1">Homodimer.</text>
</comment>
<comment type="subcellular location">
    <subcellularLocation>
        <location evidence="1">Cytoplasm</location>
    </subcellularLocation>
</comment>
<comment type="domain">
    <text evidence="1">Consists of three domains: the N-terminal catalytic domain, the editing domain and the C-terminal anticodon-binding domain.</text>
</comment>
<comment type="similarity">
    <text evidence="1">Belongs to the class-II aminoacyl-tRNA synthetase family. ProS type 1 subfamily.</text>
</comment>
<name>SYP_LACLS</name>
<accession>Q02VZ7</accession>
<gene>
    <name evidence="1" type="primary">proS</name>
    <name type="ordered locus">LACR_2432</name>
</gene>
<proteinExistence type="inferred from homology"/>
<evidence type="ECO:0000255" key="1">
    <source>
        <dbReference type="HAMAP-Rule" id="MF_01569"/>
    </source>
</evidence>
<dbReference type="EC" id="6.1.1.15" evidence="1"/>
<dbReference type="EMBL" id="CP000425">
    <property type="protein sequence ID" value="ABJ73875.1"/>
    <property type="molecule type" value="Genomic_DNA"/>
</dbReference>
<dbReference type="RefSeq" id="WP_011677188.1">
    <property type="nucleotide sequence ID" value="NC_008527.1"/>
</dbReference>
<dbReference type="SMR" id="Q02VZ7"/>
<dbReference type="KEGG" id="llc:LACR_2432"/>
<dbReference type="HOGENOM" id="CLU_016739_0_0_9"/>
<dbReference type="Proteomes" id="UP000000240">
    <property type="component" value="Chromosome"/>
</dbReference>
<dbReference type="GO" id="GO:0005829">
    <property type="term" value="C:cytosol"/>
    <property type="evidence" value="ECO:0007669"/>
    <property type="project" value="TreeGrafter"/>
</dbReference>
<dbReference type="GO" id="GO:0002161">
    <property type="term" value="F:aminoacyl-tRNA deacylase activity"/>
    <property type="evidence" value="ECO:0007669"/>
    <property type="project" value="InterPro"/>
</dbReference>
<dbReference type="GO" id="GO:0005524">
    <property type="term" value="F:ATP binding"/>
    <property type="evidence" value="ECO:0007669"/>
    <property type="project" value="UniProtKB-UniRule"/>
</dbReference>
<dbReference type="GO" id="GO:0140096">
    <property type="term" value="F:catalytic activity, acting on a protein"/>
    <property type="evidence" value="ECO:0007669"/>
    <property type="project" value="UniProtKB-ARBA"/>
</dbReference>
<dbReference type="GO" id="GO:0004827">
    <property type="term" value="F:proline-tRNA ligase activity"/>
    <property type="evidence" value="ECO:0007669"/>
    <property type="project" value="UniProtKB-UniRule"/>
</dbReference>
<dbReference type="GO" id="GO:0016740">
    <property type="term" value="F:transferase activity"/>
    <property type="evidence" value="ECO:0007669"/>
    <property type="project" value="UniProtKB-ARBA"/>
</dbReference>
<dbReference type="GO" id="GO:0006433">
    <property type="term" value="P:prolyl-tRNA aminoacylation"/>
    <property type="evidence" value="ECO:0007669"/>
    <property type="project" value="UniProtKB-UniRule"/>
</dbReference>
<dbReference type="CDD" id="cd04334">
    <property type="entry name" value="ProRS-INS"/>
    <property type="match status" value="1"/>
</dbReference>
<dbReference type="CDD" id="cd00861">
    <property type="entry name" value="ProRS_anticodon_short"/>
    <property type="match status" value="1"/>
</dbReference>
<dbReference type="FunFam" id="3.40.50.800:FF:000011">
    <property type="entry name" value="Proline--tRNA ligase"/>
    <property type="match status" value="1"/>
</dbReference>
<dbReference type="Gene3D" id="3.40.50.800">
    <property type="entry name" value="Anticodon-binding domain"/>
    <property type="match status" value="1"/>
</dbReference>
<dbReference type="Gene3D" id="3.30.930.10">
    <property type="entry name" value="Bira Bifunctional Protein, Domain 2"/>
    <property type="match status" value="2"/>
</dbReference>
<dbReference type="Gene3D" id="3.90.960.10">
    <property type="entry name" value="YbaK/aminoacyl-tRNA synthetase-associated domain"/>
    <property type="match status" value="1"/>
</dbReference>
<dbReference type="HAMAP" id="MF_01569">
    <property type="entry name" value="Pro_tRNA_synth_type1"/>
    <property type="match status" value="1"/>
</dbReference>
<dbReference type="InterPro" id="IPR002314">
    <property type="entry name" value="aa-tRNA-synt_IIb"/>
</dbReference>
<dbReference type="InterPro" id="IPR006195">
    <property type="entry name" value="aa-tRNA-synth_II"/>
</dbReference>
<dbReference type="InterPro" id="IPR045864">
    <property type="entry name" value="aa-tRNA-synth_II/BPL/LPL"/>
</dbReference>
<dbReference type="InterPro" id="IPR004154">
    <property type="entry name" value="Anticodon-bd"/>
</dbReference>
<dbReference type="InterPro" id="IPR036621">
    <property type="entry name" value="Anticodon-bd_dom_sf"/>
</dbReference>
<dbReference type="InterPro" id="IPR002316">
    <property type="entry name" value="Pro-tRNA-ligase_IIa"/>
</dbReference>
<dbReference type="InterPro" id="IPR004500">
    <property type="entry name" value="Pro-tRNA-synth_IIa_bac-type"/>
</dbReference>
<dbReference type="InterPro" id="IPR023717">
    <property type="entry name" value="Pro-tRNA-Synthase_IIa_type1"/>
</dbReference>
<dbReference type="InterPro" id="IPR050062">
    <property type="entry name" value="Pro-tRNA_synthetase"/>
</dbReference>
<dbReference type="InterPro" id="IPR044140">
    <property type="entry name" value="ProRS_anticodon_short"/>
</dbReference>
<dbReference type="InterPro" id="IPR036754">
    <property type="entry name" value="YbaK/aa-tRNA-synt-asso_dom_sf"/>
</dbReference>
<dbReference type="InterPro" id="IPR007214">
    <property type="entry name" value="YbaK/aa-tRNA-synth-assoc-dom"/>
</dbReference>
<dbReference type="NCBIfam" id="NF006625">
    <property type="entry name" value="PRK09194.1"/>
    <property type="match status" value="1"/>
</dbReference>
<dbReference type="NCBIfam" id="TIGR00409">
    <property type="entry name" value="proS_fam_II"/>
    <property type="match status" value="2"/>
</dbReference>
<dbReference type="PANTHER" id="PTHR42753">
    <property type="entry name" value="MITOCHONDRIAL RIBOSOME PROTEIN L39/PROLYL-TRNA LIGASE FAMILY MEMBER"/>
    <property type="match status" value="1"/>
</dbReference>
<dbReference type="PANTHER" id="PTHR42753:SF2">
    <property type="entry name" value="PROLINE--TRNA LIGASE"/>
    <property type="match status" value="1"/>
</dbReference>
<dbReference type="Pfam" id="PF03129">
    <property type="entry name" value="HGTP_anticodon"/>
    <property type="match status" value="1"/>
</dbReference>
<dbReference type="Pfam" id="PF00587">
    <property type="entry name" value="tRNA-synt_2b"/>
    <property type="match status" value="1"/>
</dbReference>
<dbReference type="Pfam" id="PF04073">
    <property type="entry name" value="tRNA_edit"/>
    <property type="match status" value="1"/>
</dbReference>
<dbReference type="PRINTS" id="PR01046">
    <property type="entry name" value="TRNASYNTHPRO"/>
</dbReference>
<dbReference type="SUPFAM" id="SSF52954">
    <property type="entry name" value="Class II aaRS ABD-related"/>
    <property type="match status" value="1"/>
</dbReference>
<dbReference type="SUPFAM" id="SSF55681">
    <property type="entry name" value="Class II aaRS and biotin synthetases"/>
    <property type="match status" value="1"/>
</dbReference>
<dbReference type="SUPFAM" id="SSF55826">
    <property type="entry name" value="YbaK/ProRS associated domain"/>
    <property type="match status" value="1"/>
</dbReference>
<dbReference type="PROSITE" id="PS50862">
    <property type="entry name" value="AA_TRNA_LIGASE_II"/>
    <property type="match status" value="1"/>
</dbReference>
<feature type="chain" id="PRO_0000288340" description="Proline--tRNA ligase">
    <location>
        <begin position="1"/>
        <end position="616"/>
    </location>
</feature>